<reference key="1">
    <citation type="journal article" date="2006" name="J. Bacteriol.">
        <title>Pathogenomic sequence analysis of Bacillus cereus and Bacillus thuringiensis isolates closely related to Bacillus anthracis.</title>
        <authorList>
            <person name="Han C.S."/>
            <person name="Xie G."/>
            <person name="Challacombe J.F."/>
            <person name="Altherr M.R."/>
            <person name="Bhotika S.S."/>
            <person name="Bruce D."/>
            <person name="Campbell C.S."/>
            <person name="Campbell M.L."/>
            <person name="Chen J."/>
            <person name="Chertkov O."/>
            <person name="Cleland C."/>
            <person name="Dimitrijevic M."/>
            <person name="Doggett N.A."/>
            <person name="Fawcett J.J."/>
            <person name="Glavina T."/>
            <person name="Goodwin L.A."/>
            <person name="Hill K.K."/>
            <person name="Hitchcock P."/>
            <person name="Jackson P.J."/>
            <person name="Keim P."/>
            <person name="Kewalramani A.R."/>
            <person name="Longmire J."/>
            <person name="Lucas S."/>
            <person name="Malfatti S."/>
            <person name="McMurry K."/>
            <person name="Meincke L.J."/>
            <person name="Misra M."/>
            <person name="Moseman B.L."/>
            <person name="Mundt M."/>
            <person name="Munk A.C."/>
            <person name="Okinaka R.T."/>
            <person name="Parson-Quintana B."/>
            <person name="Reilly L.P."/>
            <person name="Richardson P."/>
            <person name="Robinson D.L."/>
            <person name="Rubin E."/>
            <person name="Saunders E."/>
            <person name="Tapia R."/>
            <person name="Tesmer J.G."/>
            <person name="Thayer N."/>
            <person name="Thompson L.S."/>
            <person name="Tice H."/>
            <person name="Ticknor L.O."/>
            <person name="Wills P.L."/>
            <person name="Brettin T.S."/>
            <person name="Gilna P."/>
        </authorList>
    </citation>
    <scope>NUCLEOTIDE SEQUENCE [LARGE SCALE GENOMIC DNA]</scope>
    <source>
        <strain>ZK / E33L</strain>
    </source>
</reference>
<feature type="chain" id="PRO_0000357331" description="Methylthioribose kinase">
    <location>
        <begin position="1"/>
        <end position="393"/>
    </location>
</feature>
<feature type="binding site" evidence="1">
    <location>
        <position position="38"/>
    </location>
    <ligand>
        <name>ATP</name>
        <dbReference type="ChEBI" id="CHEBI:30616"/>
    </ligand>
</feature>
<feature type="binding site" evidence="1">
    <location>
        <position position="53"/>
    </location>
    <ligand>
        <name>ATP</name>
        <dbReference type="ChEBI" id="CHEBI:30616"/>
    </ligand>
</feature>
<feature type="binding site" evidence="1">
    <location>
        <begin position="107"/>
        <end position="109"/>
    </location>
    <ligand>
        <name>ATP</name>
        <dbReference type="ChEBI" id="CHEBI:30616"/>
    </ligand>
</feature>
<feature type="binding site" evidence="1">
    <location>
        <position position="225"/>
    </location>
    <ligand>
        <name>substrate</name>
    </ligand>
</feature>
<feature type="binding site" evidence="1">
    <location>
        <begin position="242"/>
        <end position="244"/>
    </location>
    <ligand>
        <name>ATP</name>
        <dbReference type="ChEBI" id="CHEBI:30616"/>
    </ligand>
</feature>
<feature type="binding site" evidence="1">
    <location>
        <position position="332"/>
    </location>
    <ligand>
        <name>substrate</name>
    </ligand>
</feature>
<accession>Q635P6</accession>
<protein>
    <recommendedName>
        <fullName evidence="1">Methylthioribose kinase</fullName>
        <shortName evidence="1">MTR kinase</shortName>
        <ecNumber evidence="1">2.7.1.100</ecNumber>
    </recommendedName>
</protein>
<organism>
    <name type="scientific">Bacillus cereus (strain ZK / E33L)</name>
    <dbReference type="NCBI Taxonomy" id="288681"/>
    <lineage>
        <taxon>Bacteria</taxon>
        <taxon>Bacillati</taxon>
        <taxon>Bacillota</taxon>
        <taxon>Bacilli</taxon>
        <taxon>Bacillales</taxon>
        <taxon>Bacillaceae</taxon>
        <taxon>Bacillus</taxon>
        <taxon>Bacillus cereus group</taxon>
    </lineage>
</organism>
<name>MTNK_BACCZ</name>
<keyword id="KW-0028">Amino-acid biosynthesis</keyword>
<keyword id="KW-0067">ATP-binding</keyword>
<keyword id="KW-0418">Kinase</keyword>
<keyword id="KW-0486">Methionine biosynthesis</keyword>
<keyword id="KW-0547">Nucleotide-binding</keyword>
<keyword id="KW-0808">Transferase</keyword>
<gene>
    <name evidence="1" type="primary">mtnK</name>
    <name type="ordered locus">BCE33L3790</name>
</gene>
<dbReference type="EC" id="2.7.1.100" evidence="1"/>
<dbReference type="EMBL" id="CP000001">
    <property type="protein sequence ID" value="AAU16477.1"/>
    <property type="molecule type" value="Genomic_DNA"/>
</dbReference>
<dbReference type="RefSeq" id="WP_000542708.1">
    <property type="nucleotide sequence ID" value="NC_006274.1"/>
</dbReference>
<dbReference type="SMR" id="Q635P6"/>
<dbReference type="KEGG" id="bcz:BCE33L3790"/>
<dbReference type="PATRIC" id="fig|288681.22.peg.1613"/>
<dbReference type="UniPathway" id="UPA00904">
    <property type="reaction ID" value="UER00872"/>
</dbReference>
<dbReference type="Proteomes" id="UP000002612">
    <property type="component" value="Chromosome"/>
</dbReference>
<dbReference type="GO" id="GO:0005524">
    <property type="term" value="F:ATP binding"/>
    <property type="evidence" value="ECO:0007669"/>
    <property type="project" value="UniProtKB-UniRule"/>
</dbReference>
<dbReference type="GO" id="GO:0046522">
    <property type="term" value="F:S-methyl-5-thioribose kinase activity"/>
    <property type="evidence" value="ECO:0007669"/>
    <property type="project" value="UniProtKB-UniRule"/>
</dbReference>
<dbReference type="GO" id="GO:0019509">
    <property type="term" value="P:L-methionine salvage from methylthioadenosine"/>
    <property type="evidence" value="ECO:0007669"/>
    <property type="project" value="UniProtKB-UniRule"/>
</dbReference>
<dbReference type="FunFam" id="3.30.200.20:FF:000436">
    <property type="entry name" value="Methylthioribose kinase"/>
    <property type="match status" value="1"/>
</dbReference>
<dbReference type="FunFam" id="3.90.1200.10:FF:000008">
    <property type="entry name" value="Methylthioribose kinase"/>
    <property type="match status" value="1"/>
</dbReference>
<dbReference type="Gene3D" id="3.90.1200.10">
    <property type="match status" value="1"/>
</dbReference>
<dbReference type="Gene3D" id="3.30.200.20">
    <property type="entry name" value="Phosphorylase Kinase, domain 1"/>
    <property type="match status" value="1"/>
</dbReference>
<dbReference type="HAMAP" id="MF_01683">
    <property type="entry name" value="Salvage_MtnK"/>
    <property type="match status" value="1"/>
</dbReference>
<dbReference type="InterPro" id="IPR002575">
    <property type="entry name" value="Aminoglycoside_PTrfase"/>
</dbReference>
<dbReference type="InterPro" id="IPR011009">
    <property type="entry name" value="Kinase-like_dom_sf"/>
</dbReference>
<dbReference type="InterPro" id="IPR009212">
    <property type="entry name" value="Methylthioribose_kinase"/>
</dbReference>
<dbReference type="NCBIfam" id="TIGR01767">
    <property type="entry name" value="MTRK"/>
    <property type="match status" value="1"/>
</dbReference>
<dbReference type="PANTHER" id="PTHR34273">
    <property type="entry name" value="METHYLTHIORIBOSE KINASE"/>
    <property type="match status" value="1"/>
</dbReference>
<dbReference type="PANTHER" id="PTHR34273:SF2">
    <property type="entry name" value="METHYLTHIORIBOSE KINASE"/>
    <property type="match status" value="1"/>
</dbReference>
<dbReference type="Pfam" id="PF01636">
    <property type="entry name" value="APH"/>
    <property type="match status" value="1"/>
</dbReference>
<dbReference type="PIRSF" id="PIRSF031134">
    <property type="entry name" value="MTRK"/>
    <property type="match status" value="1"/>
</dbReference>
<dbReference type="SUPFAM" id="SSF56112">
    <property type="entry name" value="Protein kinase-like (PK-like)"/>
    <property type="match status" value="1"/>
</dbReference>
<evidence type="ECO:0000255" key="1">
    <source>
        <dbReference type="HAMAP-Rule" id="MF_01683"/>
    </source>
</evidence>
<proteinExistence type="inferred from homology"/>
<sequence>MGYYSLTEVTAVQYAKEHGYFEKKANVVCHEIGDGNLNYVFKLDDGEKSIIIKQALPYAKVVGESWPLSIKRATIESKALQIFAKYVPEYVPVVYSHDEELAVTVIEDLSRLSITRTGLIDGEEYPLLSQHIGRFLAHVLFYTSDLGLESEEKRVLEGTFVNPDLCKITEDLVFTDPFGHYDTNDYEPELQLTIDELWSDKTLKLKVAQYKYKFLTRKEALIHGDLHTGSIFSSPSETKVIDPEFATYGPFGFDIGQFIANLLLNALSREEEQRGVLFFHIEKTWSYFVETFTKLWIGEGVEAYTKEKQWLPIILQNIFTDAVGFAGCELIRRTIGLAHVADLDEITNKETRIQAKKQALSLGKELIKYESKNADIQLFRTLFQQTVSGGIKA</sequence>
<comment type="function">
    <text evidence="1">Catalyzes the phosphorylation of methylthioribose into methylthioribose-1-phosphate.</text>
</comment>
<comment type="catalytic activity">
    <reaction evidence="1">
        <text>5-(methylsulfanyl)-D-ribose + ATP = 5-(methylsulfanyl)-alpha-D-ribose 1-phosphate + ADP + H(+)</text>
        <dbReference type="Rhea" id="RHEA:22312"/>
        <dbReference type="ChEBI" id="CHEBI:15378"/>
        <dbReference type="ChEBI" id="CHEBI:30616"/>
        <dbReference type="ChEBI" id="CHEBI:58533"/>
        <dbReference type="ChEBI" id="CHEBI:78440"/>
        <dbReference type="ChEBI" id="CHEBI:456216"/>
        <dbReference type="EC" id="2.7.1.100"/>
    </reaction>
</comment>
<comment type="pathway">
    <text evidence="1">Amino-acid biosynthesis; L-methionine biosynthesis via salvage pathway; S-methyl-5-thio-alpha-D-ribose 1-phosphate from S-methyl-5'-thioadenosine (hydrolase route): step 2/2.</text>
</comment>
<comment type="subunit">
    <text evidence="1">Homodimer.</text>
</comment>
<comment type="similarity">
    <text evidence="1">Belongs to the methylthioribose kinase family.</text>
</comment>